<organism>
    <name type="scientific">Mycobacterium tuberculosis (strain ATCC 25177 / H37Ra)</name>
    <dbReference type="NCBI Taxonomy" id="419947"/>
    <lineage>
        <taxon>Bacteria</taxon>
        <taxon>Bacillati</taxon>
        <taxon>Actinomycetota</taxon>
        <taxon>Actinomycetes</taxon>
        <taxon>Mycobacteriales</taxon>
        <taxon>Mycobacteriaceae</taxon>
        <taxon>Mycobacterium</taxon>
        <taxon>Mycobacterium tuberculosis complex</taxon>
    </lineage>
</organism>
<reference key="1">
    <citation type="journal article" date="2008" name="PLoS ONE">
        <title>Genetic basis of virulence attenuation revealed by comparative genomic analysis of Mycobacterium tuberculosis strain H37Ra versus H37Rv.</title>
        <authorList>
            <person name="Zheng H."/>
            <person name="Lu L."/>
            <person name="Wang B."/>
            <person name="Pu S."/>
            <person name="Zhang X."/>
            <person name="Zhu G."/>
            <person name="Shi W."/>
            <person name="Zhang L."/>
            <person name="Wang H."/>
            <person name="Wang S."/>
            <person name="Zhao G."/>
            <person name="Zhang Y."/>
        </authorList>
    </citation>
    <scope>NUCLEOTIDE SEQUENCE [LARGE SCALE GENOMIC DNA]</scope>
    <source>
        <strain>ATCC 25177 / H37Ra</strain>
    </source>
</reference>
<dbReference type="EC" id="3.2.2.23" evidence="2"/>
<dbReference type="EC" id="4.2.99.18" evidence="2"/>
<dbReference type="EMBL" id="CP000611">
    <property type="protein sequence ID" value="ABQ74730.1"/>
    <property type="molecule type" value="Genomic_DNA"/>
</dbReference>
<dbReference type="RefSeq" id="WP_003414814.1">
    <property type="nucleotide sequence ID" value="NZ_CP016972.1"/>
</dbReference>
<dbReference type="SMR" id="A5U6T0"/>
<dbReference type="GeneID" id="45426912"/>
<dbReference type="KEGG" id="mra:MRA_2950"/>
<dbReference type="eggNOG" id="COG0266">
    <property type="taxonomic scope" value="Bacteria"/>
</dbReference>
<dbReference type="HOGENOM" id="CLU_038423_1_2_11"/>
<dbReference type="Proteomes" id="UP000001988">
    <property type="component" value="Chromosome"/>
</dbReference>
<dbReference type="GO" id="GO:0034039">
    <property type="term" value="F:8-oxo-7,8-dihydroguanine DNA N-glycosylase activity"/>
    <property type="evidence" value="ECO:0007669"/>
    <property type="project" value="TreeGrafter"/>
</dbReference>
<dbReference type="GO" id="GO:0140078">
    <property type="term" value="F:class I DNA-(apurinic or apyrimidinic site) endonuclease activity"/>
    <property type="evidence" value="ECO:0007669"/>
    <property type="project" value="UniProtKB-EC"/>
</dbReference>
<dbReference type="GO" id="GO:0003684">
    <property type="term" value="F:damaged DNA binding"/>
    <property type="evidence" value="ECO:0007669"/>
    <property type="project" value="InterPro"/>
</dbReference>
<dbReference type="GO" id="GO:0008270">
    <property type="term" value="F:zinc ion binding"/>
    <property type="evidence" value="ECO:0007669"/>
    <property type="project" value="UniProtKB-UniRule"/>
</dbReference>
<dbReference type="GO" id="GO:0006284">
    <property type="term" value="P:base-excision repair"/>
    <property type="evidence" value="ECO:0007669"/>
    <property type="project" value="InterPro"/>
</dbReference>
<dbReference type="CDD" id="cd08966">
    <property type="entry name" value="EcFpg-like_N"/>
    <property type="match status" value="1"/>
</dbReference>
<dbReference type="FunFam" id="1.10.8.50:FF:000003">
    <property type="entry name" value="Formamidopyrimidine-DNA glycosylase"/>
    <property type="match status" value="1"/>
</dbReference>
<dbReference type="FunFam" id="3.20.190.10:FF:000006">
    <property type="entry name" value="Formamidopyrimidine-DNA glycosylase"/>
    <property type="match status" value="1"/>
</dbReference>
<dbReference type="Gene3D" id="1.10.8.50">
    <property type="match status" value="1"/>
</dbReference>
<dbReference type="Gene3D" id="3.20.190.10">
    <property type="entry name" value="MutM-like, N-terminal"/>
    <property type="match status" value="1"/>
</dbReference>
<dbReference type="HAMAP" id="MF_00103">
    <property type="entry name" value="Fapy_DNA_glycosyl"/>
    <property type="match status" value="1"/>
</dbReference>
<dbReference type="InterPro" id="IPR015886">
    <property type="entry name" value="DNA_glyclase/AP_lyase_DNA-bd"/>
</dbReference>
<dbReference type="InterPro" id="IPR015887">
    <property type="entry name" value="DNA_glyclase_Znf_dom_DNA_BS"/>
</dbReference>
<dbReference type="InterPro" id="IPR020629">
    <property type="entry name" value="Formamido-pyr_DNA_Glyclase"/>
</dbReference>
<dbReference type="InterPro" id="IPR012319">
    <property type="entry name" value="FPG_cat"/>
</dbReference>
<dbReference type="InterPro" id="IPR035937">
    <property type="entry name" value="MutM-like_N-ter"/>
</dbReference>
<dbReference type="InterPro" id="IPR010979">
    <property type="entry name" value="Ribosomal_uS13-like_H2TH"/>
</dbReference>
<dbReference type="InterPro" id="IPR000214">
    <property type="entry name" value="Znf_DNA_glyclase/AP_lyase"/>
</dbReference>
<dbReference type="InterPro" id="IPR010663">
    <property type="entry name" value="Znf_FPG/IleRS"/>
</dbReference>
<dbReference type="NCBIfam" id="TIGR00577">
    <property type="entry name" value="fpg"/>
    <property type="match status" value="1"/>
</dbReference>
<dbReference type="NCBIfam" id="NF002211">
    <property type="entry name" value="PRK01103.1"/>
    <property type="match status" value="1"/>
</dbReference>
<dbReference type="PANTHER" id="PTHR22993">
    <property type="entry name" value="FORMAMIDOPYRIMIDINE-DNA GLYCOSYLASE"/>
    <property type="match status" value="1"/>
</dbReference>
<dbReference type="PANTHER" id="PTHR22993:SF9">
    <property type="entry name" value="FORMAMIDOPYRIMIDINE-DNA GLYCOSYLASE"/>
    <property type="match status" value="1"/>
</dbReference>
<dbReference type="Pfam" id="PF01149">
    <property type="entry name" value="Fapy_DNA_glyco"/>
    <property type="match status" value="1"/>
</dbReference>
<dbReference type="Pfam" id="PF06831">
    <property type="entry name" value="H2TH"/>
    <property type="match status" value="1"/>
</dbReference>
<dbReference type="Pfam" id="PF06827">
    <property type="entry name" value="zf-FPG_IleRS"/>
    <property type="match status" value="1"/>
</dbReference>
<dbReference type="SMART" id="SM00898">
    <property type="entry name" value="Fapy_DNA_glyco"/>
    <property type="match status" value="1"/>
</dbReference>
<dbReference type="SMART" id="SM01232">
    <property type="entry name" value="H2TH"/>
    <property type="match status" value="1"/>
</dbReference>
<dbReference type="SUPFAM" id="SSF57716">
    <property type="entry name" value="Glucocorticoid receptor-like (DNA-binding domain)"/>
    <property type="match status" value="1"/>
</dbReference>
<dbReference type="SUPFAM" id="SSF81624">
    <property type="entry name" value="N-terminal domain of MutM-like DNA repair proteins"/>
    <property type="match status" value="1"/>
</dbReference>
<dbReference type="SUPFAM" id="SSF46946">
    <property type="entry name" value="S13-like H2TH domain"/>
    <property type="match status" value="1"/>
</dbReference>
<dbReference type="PROSITE" id="PS51068">
    <property type="entry name" value="FPG_CAT"/>
    <property type="match status" value="1"/>
</dbReference>
<dbReference type="PROSITE" id="PS01242">
    <property type="entry name" value="ZF_FPG_1"/>
    <property type="match status" value="1"/>
</dbReference>
<dbReference type="PROSITE" id="PS51066">
    <property type="entry name" value="ZF_FPG_2"/>
    <property type="match status" value="1"/>
</dbReference>
<sequence length="289" mass="31951">MPELPEVEVVRRGLQAHVTGRTITEVRVHHPRAVRRHDAGPADLTARLRGARINGTDRRGKYLWLTLNTAGVHRPTDTALVVHLGMSGQMLLGAVPCAAHVRISALLDDGTVLSFADQRTFGGWLLADLVTVDGSVVPVPVAHLARDPLDPRFDCDAVVKVLRRKHSELKRQLLDQRVVSGIGNIYADEALWRAKVNGAHVAATLRCRRLGAVLHAAADVMREALAKGGTSFDSLYVNVNGESGYFERSLDAYGREGENCRRCGAVIRRERFMNRSSFYCPRCQPRPRK</sequence>
<accession>A5U6T0</accession>
<feature type="initiator methionine" description="Removed" evidence="1">
    <location>
        <position position="1"/>
    </location>
</feature>
<feature type="chain" id="PRO_1000008723" description="Formamidopyrimidine-DNA glycosylase">
    <location>
        <begin position="2"/>
        <end position="289"/>
    </location>
</feature>
<feature type="zinc finger region" description="FPG-type" evidence="2">
    <location>
        <begin position="251"/>
        <end position="285"/>
    </location>
</feature>
<feature type="active site" description="Schiff-base intermediate with DNA" evidence="2">
    <location>
        <position position="2"/>
    </location>
</feature>
<feature type="active site" description="Proton donor" evidence="2">
    <location>
        <position position="3"/>
    </location>
</feature>
<feature type="active site" description="Proton donor; for beta-elimination activity" evidence="2">
    <location>
        <position position="61"/>
    </location>
</feature>
<feature type="active site" description="Proton donor; for delta-elimination activity" evidence="2">
    <location>
        <position position="275"/>
    </location>
</feature>
<feature type="binding site" evidence="2">
    <location>
        <position position="100"/>
    </location>
    <ligand>
        <name>DNA</name>
        <dbReference type="ChEBI" id="CHEBI:16991"/>
    </ligand>
</feature>
<feature type="binding site" evidence="2">
    <location>
        <position position="119"/>
    </location>
    <ligand>
        <name>DNA</name>
        <dbReference type="ChEBI" id="CHEBI:16991"/>
    </ligand>
</feature>
<feature type="binding site" evidence="2">
    <location>
        <position position="165"/>
    </location>
    <ligand>
        <name>DNA</name>
        <dbReference type="ChEBI" id="CHEBI:16991"/>
    </ligand>
</feature>
<protein>
    <recommendedName>
        <fullName evidence="2">Formamidopyrimidine-DNA glycosylase</fullName>
        <shortName evidence="2">Fapy-DNA glycosylase</shortName>
        <ecNumber evidence="2">3.2.2.23</ecNumber>
    </recommendedName>
    <alternativeName>
        <fullName evidence="2">DNA-(apurinic or apyrimidinic site) lyase MutM</fullName>
        <shortName evidence="2">AP lyase MutM</shortName>
        <ecNumber evidence="2">4.2.99.18</ecNumber>
    </alternativeName>
</protein>
<comment type="function">
    <text evidence="2">Involved in base excision repair of DNA damaged by oxidation or by mutagenic agents. Acts as a DNA glycosylase that recognizes and removes damaged bases. Has a preference for oxidized purines, such as 7,8-dihydro-8-oxoguanine (8-oxoG). Has AP (apurinic/apyrimidinic) lyase activity and introduces nicks in the DNA strand. Cleaves the DNA backbone by beta-delta elimination to generate a single-strand break at the site of the removed base with both 3'- and 5'-phosphates.</text>
</comment>
<comment type="catalytic activity">
    <reaction evidence="2">
        <text>Hydrolysis of DNA containing ring-opened 7-methylguanine residues, releasing 2,6-diamino-4-hydroxy-5-(N-methyl)formamidopyrimidine.</text>
        <dbReference type="EC" id="3.2.2.23"/>
    </reaction>
</comment>
<comment type="catalytic activity">
    <reaction evidence="2">
        <text>2'-deoxyribonucleotide-(2'-deoxyribose 5'-phosphate)-2'-deoxyribonucleotide-DNA = a 3'-end 2'-deoxyribonucleotide-(2,3-dehydro-2,3-deoxyribose 5'-phosphate)-DNA + a 5'-end 5'-phospho-2'-deoxyribonucleoside-DNA + H(+)</text>
        <dbReference type="Rhea" id="RHEA:66592"/>
        <dbReference type="Rhea" id="RHEA-COMP:13180"/>
        <dbReference type="Rhea" id="RHEA-COMP:16897"/>
        <dbReference type="Rhea" id="RHEA-COMP:17067"/>
        <dbReference type="ChEBI" id="CHEBI:15378"/>
        <dbReference type="ChEBI" id="CHEBI:136412"/>
        <dbReference type="ChEBI" id="CHEBI:157695"/>
        <dbReference type="ChEBI" id="CHEBI:167181"/>
        <dbReference type="EC" id="4.2.99.18"/>
    </reaction>
</comment>
<comment type="cofactor">
    <cofactor evidence="2">
        <name>Zn(2+)</name>
        <dbReference type="ChEBI" id="CHEBI:29105"/>
    </cofactor>
    <text evidence="2">Binds 1 zinc ion per subunit.</text>
</comment>
<comment type="subunit">
    <text evidence="2">Monomer.</text>
</comment>
<comment type="similarity">
    <text evidence="2">Belongs to the FPG family.</text>
</comment>
<gene>
    <name evidence="2" type="primary">mutM</name>
    <name evidence="2" type="synonym">fpg</name>
    <name type="ordered locus">MRA_2950</name>
</gene>
<proteinExistence type="inferred from homology"/>
<evidence type="ECO:0000250" key="1"/>
<evidence type="ECO:0000255" key="2">
    <source>
        <dbReference type="HAMAP-Rule" id="MF_00103"/>
    </source>
</evidence>
<keyword id="KW-0227">DNA damage</keyword>
<keyword id="KW-0234">DNA repair</keyword>
<keyword id="KW-0238">DNA-binding</keyword>
<keyword id="KW-0326">Glycosidase</keyword>
<keyword id="KW-0378">Hydrolase</keyword>
<keyword id="KW-0456">Lyase</keyword>
<keyword id="KW-0479">Metal-binding</keyword>
<keyword id="KW-0511">Multifunctional enzyme</keyword>
<keyword id="KW-1185">Reference proteome</keyword>
<keyword id="KW-0862">Zinc</keyword>
<keyword id="KW-0863">Zinc-finger</keyword>
<name>FPG_MYCTA</name>